<keyword id="KW-0472">Membrane</keyword>
<keyword id="KW-0602">Photosynthesis</keyword>
<keyword id="KW-0603">Photosystem I</keyword>
<keyword id="KW-1185">Reference proteome</keyword>
<keyword id="KW-0793">Thylakoid</keyword>
<sequence>MVKRGDKVRIKRKESYWYGDVGTVASVDKAGILYPVIVRFNTVNYNGLSGSAGGINTNNFAESELEVIS</sequence>
<name>PSAE_RIPO1</name>
<dbReference type="EMBL" id="CP001287">
    <property type="protein sequence ID" value="ACK64237.1"/>
    <property type="molecule type" value="Genomic_DNA"/>
</dbReference>
<dbReference type="RefSeq" id="WP_012593514.1">
    <property type="nucleotide sequence ID" value="NC_011726.1"/>
</dbReference>
<dbReference type="SMR" id="B7K1T0"/>
<dbReference type="STRING" id="41431.PCC8801_0131"/>
<dbReference type="KEGG" id="cyp:PCC8801_0131"/>
<dbReference type="eggNOG" id="ENOG503313D">
    <property type="taxonomic scope" value="Bacteria"/>
</dbReference>
<dbReference type="HOGENOM" id="CLU_136462_2_1_3"/>
<dbReference type="OrthoDB" id="427926at2"/>
<dbReference type="Proteomes" id="UP000008204">
    <property type="component" value="Chromosome"/>
</dbReference>
<dbReference type="GO" id="GO:0009538">
    <property type="term" value="C:photosystem I reaction center"/>
    <property type="evidence" value="ECO:0007669"/>
    <property type="project" value="InterPro"/>
</dbReference>
<dbReference type="GO" id="GO:0031676">
    <property type="term" value="C:plasma membrane-derived thylakoid membrane"/>
    <property type="evidence" value="ECO:0007669"/>
    <property type="project" value="UniProtKB-SubCell"/>
</dbReference>
<dbReference type="GO" id="GO:0015979">
    <property type="term" value="P:photosynthesis"/>
    <property type="evidence" value="ECO:0007669"/>
    <property type="project" value="UniProtKB-UniRule"/>
</dbReference>
<dbReference type="Gene3D" id="2.30.30.50">
    <property type="match status" value="1"/>
</dbReference>
<dbReference type="HAMAP" id="MF_00613">
    <property type="entry name" value="PSI_PsaE"/>
    <property type="match status" value="1"/>
</dbReference>
<dbReference type="InterPro" id="IPR008990">
    <property type="entry name" value="Elect_transpt_acc-like_dom_sf"/>
</dbReference>
<dbReference type="InterPro" id="IPR003375">
    <property type="entry name" value="PSI_PsaE"/>
</dbReference>
<dbReference type="NCBIfam" id="NF002745">
    <property type="entry name" value="PRK02749.1"/>
    <property type="match status" value="1"/>
</dbReference>
<dbReference type="PANTHER" id="PTHR34549">
    <property type="entry name" value="PHOTOSYSTEM I REACTION CENTER SUBUNIT IV A, CHLOROPLASTIC-RELATED"/>
    <property type="match status" value="1"/>
</dbReference>
<dbReference type="PANTHER" id="PTHR34549:SF2">
    <property type="entry name" value="PHOTOSYSTEM I SUBUNIT IV"/>
    <property type="match status" value="1"/>
</dbReference>
<dbReference type="Pfam" id="PF02427">
    <property type="entry name" value="PSI_PsaE"/>
    <property type="match status" value="1"/>
</dbReference>
<dbReference type="SUPFAM" id="SSF50090">
    <property type="entry name" value="Electron transport accessory proteins"/>
    <property type="match status" value="1"/>
</dbReference>
<accession>B7K1T0</accession>
<gene>
    <name evidence="1" type="primary">psaE</name>
    <name type="ordered locus">PCC8801_0131</name>
</gene>
<feature type="chain" id="PRO_1000130399" description="Photosystem I reaction center subunit IV">
    <location>
        <begin position="1"/>
        <end position="69"/>
    </location>
</feature>
<proteinExistence type="inferred from homology"/>
<organism>
    <name type="scientific">Rippkaea orientalis (strain PCC 8801 / RF-1)</name>
    <name type="common">Cyanothece sp. (strain PCC 8801)</name>
    <dbReference type="NCBI Taxonomy" id="41431"/>
    <lineage>
        <taxon>Bacteria</taxon>
        <taxon>Bacillati</taxon>
        <taxon>Cyanobacteriota</taxon>
        <taxon>Cyanophyceae</taxon>
        <taxon>Oscillatoriophycideae</taxon>
        <taxon>Chroococcales</taxon>
        <taxon>Aphanothecaceae</taxon>
        <taxon>Rippkaea</taxon>
        <taxon>Rippkaea orientalis</taxon>
    </lineage>
</organism>
<protein>
    <recommendedName>
        <fullName evidence="1">Photosystem I reaction center subunit IV</fullName>
    </recommendedName>
</protein>
<comment type="function">
    <text evidence="1">Stabilizes the interaction between PsaC and the PSI core, assists the docking of the ferredoxin to PSI and interacts with ferredoxin-NADP oxidoreductase.</text>
</comment>
<comment type="subcellular location">
    <subcellularLocation>
        <location evidence="1">Cellular thylakoid membrane</location>
        <topology evidence="1">Peripheral membrane protein</topology>
    </subcellularLocation>
</comment>
<comment type="similarity">
    <text evidence="1">Belongs to the PsaE family.</text>
</comment>
<reference key="1">
    <citation type="journal article" date="2011" name="MBio">
        <title>Novel metabolic attributes of the genus Cyanothece, comprising a group of unicellular nitrogen-fixing Cyanobacteria.</title>
        <authorList>
            <person name="Bandyopadhyay A."/>
            <person name="Elvitigala T."/>
            <person name="Welsh E."/>
            <person name="Stockel J."/>
            <person name="Liberton M."/>
            <person name="Min H."/>
            <person name="Sherman L.A."/>
            <person name="Pakrasi H.B."/>
        </authorList>
    </citation>
    <scope>NUCLEOTIDE SEQUENCE [LARGE SCALE GENOMIC DNA]</scope>
    <source>
        <strain>PCC 8801 / RF-1</strain>
    </source>
</reference>
<evidence type="ECO:0000255" key="1">
    <source>
        <dbReference type="HAMAP-Rule" id="MF_00613"/>
    </source>
</evidence>